<keyword id="KW-0030">Aminoacyl-tRNA synthetase</keyword>
<keyword id="KW-0067">ATP-binding</keyword>
<keyword id="KW-0963">Cytoplasm</keyword>
<keyword id="KW-0436">Ligase</keyword>
<keyword id="KW-0547">Nucleotide-binding</keyword>
<keyword id="KW-0648">Protein biosynthesis</keyword>
<keyword id="KW-1185">Reference proteome</keyword>
<organism>
    <name type="scientific">Shigella sonnei (strain Ss046)</name>
    <dbReference type="NCBI Taxonomy" id="300269"/>
    <lineage>
        <taxon>Bacteria</taxon>
        <taxon>Pseudomonadati</taxon>
        <taxon>Pseudomonadota</taxon>
        <taxon>Gammaproteobacteria</taxon>
        <taxon>Enterobacterales</taxon>
        <taxon>Enterobacteriaceae</taxon>
        <taxon>Shigella</taxon>
    </lineage>
</organism>
<evidence type="ECO:0000255" key="1">
    <source>
        <dbReference type="HAMAP-Rule" id="MF_00255"/>
    </source>
</evidence>
<sequence length="689" mass="76783">MSEKTFLVEIGTEELPPKALRSLAESFAANFTAELDNAGLAHGTVQWFAAPRRLALKVANLAEAQPDREIEKRGPAIAQAFDAEGKPSKAAEGWARGCGITVDQAERLTTDKGEWLLYRAHVKGESTEALLPNMVATSLAKLPIPKLMRWGASDVHFVRPVHTVTLLLGDKVIPATILGIQSDRVIRGHRFMGEPEFTIDNADQYPEILRERGKVIADYEERKAKIKADAEEAARKIGGNADLSESLLEEVASLVEWPVVLTAKFEEKFLAVPAEALVYTMKGDQKYFPVYANDGKLLPNFIFVANIESKDPQQIISGNEKVVRPRLADAEFFFNTDRKKRLEDNLPRLQTVLFQQQLGTLRDKTDRIQALAGWIAEQIGADVNHATRAGLLSKCDLMTNMVFEFTDTQGVMGMHYARHDGEAEDVAVALNEQYQPRFAGDDLPSNPVACALAIADKMDTLAGIFGIGQHPKGDKDPFALRRAALGVLRIIVEKNLNLDLQTLTEEAVRLYGDKLTNANVVDDVIDFMLGRFRAWYQDEGYTVDTIQAVLARRPTRPADFDARMKAVSHFRTLDAAAALAAANKRVSNILAKSDEVLSDRVNASTLKEPEEIKLAMQVVVLRDKLEPYFAEGRYQDALVELAELREPVDAFFDKVMVMVDDKELRLNRLTMLEKLRELFLRVADISLLQ</sequence>
<reference key="1">
    <citation type="journal article" date="2005" name="Nucleic Acids Res.">
        <title>Genome dynamics and diversity of Shigella species, the etiologic agents of bacillary dysentery.</title>
        <authorList>
            <person name="Yang F."/>
            <person name="Yang J."/>
            <person name="Zhang X."/>
            <person name="Chen L."/>
            <person name="Jiang Y."/>
            <person name="Yan Y."/>
            <person name="Tang X."/>
            <person name="Wang J."/>
            <person name="Xiong Z."/>
            <person name="Dong J."/>
            <person name="Xue Y."/>
            <person name="Zhu Y."/>
            <person name="Xu X."/>
            <person name="Sun L."/>
            <person name="Chen S."/>
            <person name="Nie H."/>
            <person name="Peng J."/>
            <person name="Xu J."/>
            <person name="Wang Y."/>
            <person name="Yuan Z."/>
            <person name="Wen Y."/>
            <person name="Yao Z."/>
            <person name="Shen Y."/>
            <person name="Qiang B."/>
            <person name="Hou Y."/>
            <person name="Yu J."/>
            <person name="Jin Q."/>
        </authorList>
    </citation>
    <scope>NUCLEOTIDE SEQUENCE [LARGE SCALE GENOMIC DNA]</scope>
    <source>
        <strain>Ss046</strain>
    </source>
</reference>
<gene>
    <name evidence="1" type="primary">glyS</name>
    <name type="ordered locus">SSON_3830</name>
</gene>
<feature type="chain" id="PRO_1000006415" description="Glycine--tRNA ligase beta subunit">
    <location>
        <begin position="1"/>
        <end position="689"/>
    </location>
</feature>
<comment type="catalytic activity">
    <reaction evidence="1">
        <text>tRNA(Gly) + glycine + ATP = glycyl-tRNA(Gly) + AMP + diphosphate</text>
        <dbReference type="Rhea" id="RHEA:16013"/>
        <dbReference type="Rhea" id="RHEA-COMP:9664"/>
        <dbReference type="Rhea" id="RHEA-COMP:9683"/>
        <dbReference type="ChEBI" id="CHEBI:30616"/>
        <dbReference type="ChEBI" id="CHEBI:33019"/>
        <dbReference type="ChEBI" id="CHEBI:57305"/>
        <dbReference type="ChEBI" id="CHEBI:78442"/>
        <dbReference type="ChEBI" id="CHEBI:78522"/>
        <dbReference type="ChEBI" id="CHEBI:456215"/>
        <dbReference type="EC" id="6.1.1.14"/>
    </reaction>
</comment>
<comment type="subunit">
    <text evidence="1">Tetramer of two alpha and two beta subunits.</text>
</comment>
<comment type="subcellular location">
    <subcellularLocation>
        <location evidence="1">Cytoplasm</location>
    </subcellularLocation>
</comment>
<comment type="similarity">
    <text evidence="1">Belongs to the class-II aminoacyl-tRNA synthetase family.</text>
</comment>
<name>SYGB_SHISS</name>
<protein>
    <recommendedName>
        <fullName evidence="1">Glycine--tRNA ligase beta subunit</fullName>
        <ecNumber evidence="1">6.1.1.14</ecNumber>
    </recommendedName>
    <alternativeName>
        <fullName evidence="1">Glycyl-tRNA synthetase beta subunit</fullName>
        <shortName evidence="1">GlyRS</shortName>
    </alternativeName>
</protein>
<proteinExistence type="inferred from homology"/>
<dbReference type="EC" id="6.1.1.14" evidence="1"/>
<dbReference type="EMBL" id="CP000038">
    <property type="protein sequence ID" value="AAZ90372.1"/>
    <property type="molecule type" value="Genomic_DNA"/>
</dbReference>
<dbReference type="RefSeq" id="WP_001291771.1">
    <property type="nucleotide sequence ID" value="NC_007384.1"/>
</dbReference>
<dbReference type="SMR" id="Q3YVU0"/>
<dbReference type="GeneID" id="93778289"/>
<dbReference type="KEGG" id="ssn:SSON_3830"/>
<dbReference type="HOGENOM" id="CLU_007220_2_2_6"/>
<dbReference type="Proteomes" id="UP000002529">
    <property type="component" value="Chromosome"/>
</dbReference>
<dbReference type="GO" id="GO:0005829">
    <property type="term" value="C:cytosol"/>
    <property type="evidence" value="ECO:0007669"/>
    <property type="project" value="TreeGrafter"/>
</dbReference>
<dbReference type="GO" id="GO:0004814">
    <property type="term" value="F:arginine-tRNA ligase activity"/>
    <property type="evidence" value="ECO:0007669"/>
    <property type="project" value="InterPro"/>
</dbReference>
<dbReference type="GO" id="GO:0005524">
    <property type="term" value="F:ATP binding"/>
    <property type="evidence" value="ECO:0007669"/>
    <property type="project" value="UniProtKB-UniRule"/>
</dbReference>
<dbReference type="GO" id="GO:0004820">
    <property type="term" value="F:glycine-tRNA ligase activity"/>
    <property type="evidence" value="ECO:0007669"/>
    <property type="project" value="UniProtKB-UniRule"/>
</dbReference>
<dbReference type="GO" id="GO:0006420">
    <property type="term" value="P:arginyl-tRNA aminoacylation"/>
    <property type="evidence" value="ECO:0007669"/>
    <property type="project" value="InterPro"/>
</dbReference>
<dbReference type="GO" id="GO:0006426">
    <property type="term" value="P:glycyl-tRNA aminoacylation"/>
    <property type="evidence" value="ECO:0007669"/>
    <property type="project" value="UniProtKB-UniRule"/>
</dbReference>
<dbReference type="HAMAP" id="MF_00255">
    <property type="entry name" value="Gly_tRNA_synth_beta"/>
    <property type="match status" value="1"/>
</dbReference>
<dbReference type="InterPro" id="IPR008909">
    <property type="entry name" value="DALR_anticod-bd"/>
</dbReference>
<dbReference type="InterPro" id="IPR015944">
    <property type="entry name" value="Gly-tRNA-synth_bsu"/>
</dbReference>
<dbReference type="InterPro" id="IPR006194">
    <property type="entry name" value="Gly-tRNA-synth_heterodimer"/>
</dbReference>
<dbReference type="NCBIfam" id="TIGR00211">
    <property type="entry name" value="glyS"/>
    <property type="match status" value="1"/>
</dbReference>
<dbReference type="PANTHER" id="PTHR30075:SF2">
    <property type="entry name" value="GLYCINE--TRNA LIGASE, CHLOROPLASTIC_MITOCHONDRIAL 2"/>
    <property type="match status" value="1"/>
</dbReference>
<dbReference type="PANTHER" id="PTHR30075">
    <property type="entry name" value="GLYCYL-TRNA SYNTHETASE"/>
    <property type="match status" value="1"/>
</dbReference>
<dbReference type="Pfam" id="PF05746">
    <property type="entry name" value="DALR_1"/>
    <property type="match status" value="1"/>
</dbReference>
<dbReference type="Pfam" id="PF02092">
    <property type="entry name" value="tRNA_synt_2f"/>
    <property type="match status" value="1"/>
</dbReference>
<dbReference type="PRINTS" id="PR01045">
    <property type="entry name" value="TRNASYNTHGB"/>
</dbReference>
<dbReference type="SUPFAM" id="SSF109604">
    <property type="entry name" value="HD-domain/PDEase-like"/>
    <property type="match status" value="1"/>
</dbReference>
<dbReference type="PROSITE" id="PS50861">
    <property type="entry name" value="AA_TRNA_LIGASE_II_GLYAB"/>
    <property type="match status" value="1"/>
</dbReference>
<accession>Q3YVU0</accession>